<gene>
    <name type="primary">sbcC</name>
    <name type="ordered locus">PA4282</name>
</gene>
<keyword id="KW-0067">ATP-binding</keyword>
<keyword id="KW-0175">Coiled coil</keyword>
<keyword id="KW-0233">DNA recombination</keyword>
<keyword id="KW-0235">DNA replication</keyword>
<keyword id="KW-0255">Endonuclease</keyword>
<keyword id="KW-0269">Exonuclease</keyword>
<keyword id="KW-0378">Hydrolase</keyword>
<keyword id="KW-0540">Nuclease</keyword>
<keyword id="KW-0547">Nucleotide-binding</keyword>
<keyword id="KW-1185">Reference proteome</keyword>
<reference key="1">
    <citation type="journal article" date="2000" name="Nature">
        <title>Complete genome sequence of Pseudomonas aeruginosa PAO1, an opportunistic pathogen.</title>
        <authorList>
            <person name="Stover C.K."/>
            <person name="Pham X.-Q.T."/>
            <person name="Erwin A.L."/>
            <person name="Mizoguchi S.D."/>
            <person name="Warrener P."/>
            <person name="Hickey M.J."/>
            <person name="Brinkman F.S.L."/>
            <person name="Hufnagle W.O."/>
            <person name="Kowalik D.J."/>
            <person name="Lagrou M."/>
            <person name="Garber R.L."/>
            <person name="Goltry L."/>
            <person name="Tolentino E."/>
            <person name="Westbrock-Wadman S."/>
            <person name="Yuan Y."/>
            <person name="Brody L.L."/>
            <person name="Coulter S.N."/>
            <person name="Folger K.R."/>
            <person name="Kas A."/>
            <person name="Larbig K."/>
            <person name="Lim R.M."/>
            <person name="Smith K.A."/>
            <person name="Spencer D.H."/>
            <person name="Wong G.K.-S."/>
            <person name="Wu Z."/>
            <person name="Paulsen I.T."/>
            <person name="Reizer J."/>
            <person name="Saier M.H. Jr."/>
            <person name="Hancock R.E.W."/>
            <person name="Lory S."/>
            <person name="Olson M.V."/>
        </authorList>
    </citation>
    <scope>NUCLEOTIDE SEQUENCE [LARGE SCALE GENOMIC DNA]</scope>
    <source>
        <strain>ATCC 15692 / DSM 22644 / CIP 104116 / JCM 14847 / LMG 12228 / 1C / PRS 101 / PAO1</strain>
    </source>
</reference>
<protein>
    <recommendedName>
        <fullName>Nuclease SbcCD subunit C</fullName>
    </recommendedName>
</protein>
<organism>
    <name type="scientific">Pseudomonas aeruginosa (strain ATCC 15692 / DSM 22644 / CIP 104116 / JCM 14847 / LMG 12228 / 1C / PRS 101 / PAO1)</name>
    <dbReference type="NCBI Taxonomy" id="208964"/>
    <lineage>
        <taxon>Bacteria</taxon>
        <taxon>Pseudomonadati</taxon>
        <taxon>Pseudomonadota</taxon>
        <taxon>Gammaproteobacteria</taxon>
        <taxon>Pseudomonadales</taxon>
        <taxon>Pseudomonadaceae</taxon>
        <taxon>Pseudomonas</taxon>
    </lineage>
</organism>
<evidence type="ECO:0000250" key="1"/>
<evidence type="ECO:0000255" key="2"/>
<evidence type="ECO:0000256" key="3">
    <source>
        <dbReference type="SAM" id="MobiDB-lite"/>
    </source>
</evidence>
<evidence type="ECO:0000305" key="4"/>
<dbReference type="EMBL" id="AE004091">
    <property type="protein sequence ID" value="AAG07670.1"/>
    <property type="molecule type" value="Genomic_DNA"/>
</dbReference>
<dbReference type="PIR" id="C83110">
    <property type="entry name" value="C83110"/>
</dbReference>
<dbReference type="RefSeq" id="NP_252972.1">
    <property type="nucleotide sequence ID" value="NC_002516.2"/>
</dbReference>
<dbReference type="RefSeq" id="WP_003114994.1">
    <property type="nucleotide sequence ID" value="NZ_QZGE01000034.1"/>
</dbReference>
<dbReference type="SMR" id="Q9HWB8"/>
<dbReference type="FunCoup" id="Q9HWB8">
    <property type="interactions" value="114"/>
</dbReference>
<dbReference type="STRING" id="208964.PA4282"/>
<dbReference type="PaxDb" id="208964-PA4282"/>
<dbReference type="GeneID" id="881690"/>
<dbReference type="KEGG" id="pae:PA4282"/>
<dbReference type="PATRIC" id="fig|208964.12.peg.4484"/>
<dbReference type="PseudoCAP" id="PA4282"/>
<dbReference type="HOGENOM" id="CLU_004785_1_1_6"/>
<dbReference type="InParanoid" id="Q9HWB8"/>
<dbReference type="OrthoDB" id="9795626at2"/>
<dbReference type="PhylomeDB" id="Q9HWB8"/>
<dbReference type="BioCyc" id="PAER208964:G1FZ6-4366-MONOMER"/>
<dbReference type="Proteomes" id="UP000002438">
    <property type="component" value="Chromosome"/>
</dbReference>
<dbReference type="GO" id="GO:1990391">
    <property type="term" value="C:DNA repair complex"/>
    <property type="evidence" value="ECO:0000318"/>
    <property type="project" value="GO_Central"/>
</dbReference>
<dbReference type="GO" id="GO:0005524">
    <property type="term" value="F:ATP binding"/>
    <property type="evidence" value="ECO:0007669"/>
    <property type="project" value="UniProtKB-KW"/>
</dbReference>
<dbReference type="GO" id="GO:0016887">
    <property type="term" value="F:ATP hydrolysis activity"/>
    <property type="evidence" value="ECO:0007669"/>
    <property type="project" value="InterPro"/>
</dbReference>
<dbReference type="GO" id="GO:0004529">
    <property type="term" value="F:DNA exonuclease activity"/>
    <property type="evidence" value="ECO:0000318"/>
    <property type="project" value="GO_Central"/>
</dbReference>
<dbReference type="GO" id="GO:0004519">
    <property type="term" value="F:endonuclease activity"/>
    <property type="evidence" value="ECO:0007669"/>
    <property type="project" value="UniProtKB-KW"/>
</dbReference>
<dbReference type="GO" id="GO:0006310">
    <property type="term" value="P:DNA recombination"/>
    <property type="evidence" value="ECO:0007669"/>
    <property type="project" value="UniProtKB-KW"/>
</dbReference>
<dbReference type="GO" id="GO:0006281">
    <property type="term" value="P:DNA repair"/>
    <property type="evidence" value="ECO:0000318"/>
    <property type="project" value="GO_Central"/>
</dbReference>
<dbReference type="GO" id="GO:0006260">
    <property type="term" value="P:DNA replication"/>
    <property type="evidence" value="ECO:0007669"/>
    <property type="project" value="UniProtKB-KW"/>
</dbReference>
<dbReference type="GO" id="GO:0006302">
    <property type="term" value="P:double-strand break repair"/>
    <property type="evidence" value="ECO:0007669"/>
    <property type="project" value="InterPro"/>
</dbReference>
<dbReference type="FunFam" id="3.40.50.300:FF:001446">
    <property type="entry name" value="DsDNA exonuclease SbcC"/>
    <property type="match status" value="1"/>
</dbReference>
<dbReference type="Gene3D" id="3.40.50.300">
    <property type="entry name" value="P-loop containing nucleotide triphosphate hydrolases"/>
    <property type="match status" value="2"/>
</dbReference>
<dbReference type="InterPro" id="IPR027417">
    <property type="entry name" value="P-loop_NTPase"/>
</dbReference>
<dbReference type="InterPro" id="IPR038729">
    <property type="entry name" value="Rad50/SbcC_AAA"/>
</dbReference>
<dbReference type="PANTHER" id="PTHR32114">
    <property type="entry name" value="ABC TRANSPORTER ABCH.3"/>
    <property type="match status" value="1"/>
</dbReference>
<dbReference type="PANTHER" id="PTHR32114:SF2">
    <property type="entry name" value="ABC TRANSPORTER ABCH.3"/>
    <property type="match status" value="1"/>
</dbReference>
<dbReference type="Pfam" id="PF13476">
    <property type="entry name" value="AAA_23"/>
    <property type="match status" value="1"/>
</dbReference>
<dbReference type="Pfam" id="PF13558">
    <property type="entry name" value="SbcC_Walker_B"/>
    <property type="match status" value="1"/>
</dbReference>
<dbReference type="SUPFAM" id="SSF52540">
    <property type="entry name" value="P-loop containing nucleoside triphosphate hydrolases"/>
    <property type="match status" value="2"/>
</dbReference>
<comment type="function">
    <text evidence="1">SbcCD cleaves DNA hairpin structures. These structures can inhibit DNA replication and are intermediates in certain DNA recombination reactions. The complex acts as a 3'-&gt;5' double strand exonuclease that can open hairpins. It also has a 5' single-strand endonuclease activity (By similarity).</text>
</comment>
<comment type="subunit">
    <text evidence="1">Heterodimer of SbcC and SbcD.</text>
</comment>
<comment type="similarity">
    <text evidence="4">Belongs to the SMC family. SbcC subfamily.</text>
</comment>
<accession>Q9HWB8</accession>
<name>SBCC_PSEAE</name>
<feature type="chain" id="PRO_0000105866" description="Nuclease SbcCD subunit C">
    <location>
        <begin position="1"/>
        <end position="1211"/>
    </location>
</feature>
<feature type="region of interest" description="Disordered" evidence="3">
    <location>
        <begin position="62"/>
        <end position="81"/>
    </location>
</feature>
<feature type="region of interest" description="Disordered" evidence="3">
    <location>
        <begin position="392"/>
        <end position="419"/>
    </location>
</feature>
<feature type="coiled-coil region" evidence="2">
    <location>
        <begin position="115"/>
        <end position="156"/>
    </location>
</feature>
<feature type="coiled-coil region" evidence="2">
    <location>
        <begin position="197"/>
        <end position="407"/>
    </location>
</feature>
<feature type="coiled-coil region" evidence="2">
    <location>
        <begin position="497"/>
        <end position="584"/>
    </location>
</feature>
<feature type="coiled-coil region" evidence="2">
    <location>
        <begin position="628"/>
        <end position="1048"/>
    </location>
</feature>
<feature type="compositionally biased region" description="Basic and acidic residues" evidence="3">
    <location>
        <begin position="71"/>
        <end position="81"/>
    </location>
</feature>
<feature type="compositionally biased region" description="Basic and acidic residues" evidence="3">
    <location>
        <begin position="410"/>
        <end position="419"/>
    </location>
</feature>
<feature type="binding site" evidence="2">
    <location>
        <begin position="37"/>
        <end position="44"/>
    </location>
    <ligand>
        <name>ATP</name>
        <dbReference type="ChEBI" id="CHEBI:30616"/>
    </ligand>
</feature>
<proteinExistence type="inferred from homology"/>
<sequence>MKILAIRLKNLASLAGEQEIDFTREPLSSAGLFAITGPTGAGKSTVLDALCLALFGSTPRLESTSASSKVPDGRNELSSNDERNLLRRGCASGYAEVDFVGIDGHRYRARWETRRSRDKADGALQKSQQSLQDLETQQMLAANKKSEFREQLEQKLGLNFAQFTRAVLLAQSEFSAFLKASDNDRGALLEKLTDTGLYSQLSKAAYQRASQADEQRKQLEQRLEGSLPLAEQARAGLEAALESHAQARLQEQQALQRLEGQQQWFTEEQRLLQSCEHAQGQLAEARQAWDALATERETLQWLERLAPVRGLIERLKQLEQELRHSEQQQRQRTEQQAAGTERLQGLQARLQEARERQAQADNHLRQAQAPLREAFQLESEARRLERTLAERQELHRQSNQRHAQQSDAARQLDMEQQRHVAEQAQLQAALRDSQALAALGDAWVTHQGQLATFVQRRQRALESQAQLPELEKSLAHAGEPLERLQAQWTALHGSEPDDLAARLVELRRQTDSLERQQALHKEWQQVLDQRAGLARRLGELDQRMVEQEQALLDLKRQGSQCAEEVKAAEQALQVTRELLQRQRLARSASVEQLRAGLVDGEACPVCGSQEHPYHHSEQLLAALGEHDDQEQVRAEQSLERLRQTLVGLREGYSSQRERLNQSRQEQQELTGQLAALDRQLDQWTLPEELRLLQPSAQLEWLAQRLDDLAGQRQQCQRDFDRLIARQRQTQQLQQELRAAETILQQRQQALTEQRQRYEHLQQQVEEDSQQLRPLLSDEHWQRWQADPLRTFQALGESIEQRRQQQARLQQIEQRLQELKQRCDESSWQLKQSDEQRNEARQAEERAQAELAELNGRLGAHLGQHACAQDWQLSLEHAAQAAQSAVETLQAPLDSLREEQLRLAEALEHLQQQRQRQQDEFQRLQADWQAWRERQDNLDDSRLDALLGLSEEQATQWREQLQRLQEEITRQQTLEAERQAQLLQHRRQRPETDREALEDNLRQQRERLAASEQAYLETYSQLQADNQRREQSQALLAELERARAEFRRWGRLNELIGSSSGDKFRRIAQGYNLDLLVQHSNVQLRQLARRYRLQRGGSELGLLVVDTEMGDELRSVYSLSGGETFLISLALALGLASMASSKLRIESLFIDEGFGSLDPESLQLAMDALDNLQAQGRKVAVISHVQEMHERIPVQVRVQREGNGMSSLKVVG</sequence>